<evidence type="ECO:0000255" key="1">
    <source>
        <dbReference type="HAMAP-Rule" id="MF_00093"/>
    </source>
</evidence>
<protein>
    <recommendedName>
        <fullName evidence="1">Peptide chain release factor 1</fullName>
        <shortName evidence="1">RF-1</shortName>
    </recommendedName>
</protein>
<comment type="function">
    <text evidence="1">Peptide chain release factor 1 directs the termination of translation in response to the peptide chain termination codons UAG and UAA.</text>
</comment>
<comment type="subcellular location">
    <subcellularLocation>
        <location evidence="1">Cytoplasm</location>
    </subcellularLocation>
</comment>
<comment type="PTM">
    <text evidence="1">Methylated by PrmC. Methylation increases the termination efficiency of RF1.</text>
</comment>
<comment type="similarity">
    <text evidence="1">Belongs to the prokaryotic/mitochondrial release factor family.</text>
</comment>
<keyword id="KW-0963">Cytoplasm</keyword>
<keyword id="KW-0488">Methylation</keyword>
<keyword id="KW-0648">Protein biosynthesis</keyword>
<dbReference type="EMBL" id="CP001638">
    <property type="protein sequence ID" value="ACS25962.1"/>
    <property type="molecule type" value="Genomic_DNA"/>
</dbReference>
<dbReference type="SMR" id="C5D9N4"/>
<dbReference type="STRING" id="471223.GWCH70_3322"/>
<dbReference type="KEGG" id="gwc:GWCH70_3322"/>
<dbReference type="eggNOG" id="COG0216">
    <property type="taxonomic scope" value="Bacteria"/>
</dbReference>
<dbReference type="HOGENOM" id="CLU_036856_0_1_9"/>
<dbReference type="OrthoDB" id="9806673at2"/>
<dbReference type="GO" id="GO:0005737">
    <property type="term" value="C:cytoplasm"/>
    <property type="evidence" value="ECO:0007669"/>
    <property type="project" value="UniProtKB-SubCell"/>
</dbReference>
<dbReference type="GO" id="GO:0016149">
    <property type="term" value="F:translation release factor activity, codon specific"/>
    <property type="evidence" value="ECO:0007669"/>
    <property type="project" value="UniProtKB-UniRule"/>
</dbReference>
<dbReference type="FunFam" id="3.30.160.20:FF:000004">
    <property type="entry name" value="Peptide chain release factor 1"/>
    <property type="match status" value="1"/>
</dbReference>
<dbReference type="FunFam" id="3.30.70.1660:FF:000002">
    <property type="entry name" value="Peptide chain release factor 1"/>
    <property type="match status" value="1"/>
</dbReference>
<dbReference type="FunFam" id="3.30.70.1660:FF:000004">
    <property type="entry name" value="Peptide chain release factor 1"/>
    <property type="match status" value="1"/>
</dbReference>
<dbReference type="Gene3D" id="3.30.160.20">
    <property type="match status" value="1"/>
</dbReference>
<dbReference type="Gene3D" id="3.30.70.1660">
    <property type="match status" value="1"/>
</dbReference>
<dbReference type="Gene3D" id="6.10.140.1950">
    <property type="match status" value="1"/>
</dbReference>
<dbReference type="HAMAP" id="MF_00093">
    <property type="entry name" value="Rel_fac_1"/>
    <property type="match status" value="1"/>
</dbReference>
<dbReference type="InterPro" id="IPR005139">
    <property type="entry name" value="PCRF"/>
</dbReference>
<dbReference type="InterPro" id="IPR000352">
    <property type="entry name" value="Pep_chain_release_fac_I"/>
</dbReference>
<dbReference type="InterPro" id="IPR045853">
    <property type="entry name" value="Pep_chain_release_fac_I_sf"/>
</dbReference>
<dbReference type="InterPro" id="IPR050057">
    <property type="entry name" value="Prokaryotic/Mito_RF"/>
</dbReference>
<dbReference type="InterPro" id="IPR004373">
    <property type="entry name" value="RF-1"/>
</dbReference>
<dbReference type="NCBIfam" id="TIGR00019">
    <property type="entry name" value="prfA"/>
    <property type="match status" value="1"/>
</dbReference>
<dbReference type="NCBIfam" id="NF001859">
    <property type="entry name" value="PRK00591.1"/>
    <property type="match status" value="1"/>
</dbReference>
<dbReference type="PANTHER" id="PTHR43804">
    <property type="entry name" value="LD18447P"/>
    <property type="match status" value="1"/>
</dbReference>
<dbReference type="PANTHER" id="PTHR43804:SF7">
    <property type="entry name" value="LD18447P"/>
    <property type="match status" value="1"/>
</dbReference>
<dbReference type="Pfam" id="PF03462">
    <property type="entry name" value="PCRF"/>
    <property type="match status" value="1"/>
</dbReference>
<dbReference type="Pfam" id="PF00472">
    <property type="entry name" value="RF-1"/>
    <property type="match status" value="1"/>
</dbReference>
<dbReference type="SMART" id="SM00937">
    <property type="entry name" value="PCRF"/>
    <property type="match status" value="1"/>
</dbReference>
<dbReference type="SUPFAM" id="SSF75620">
    <property type="entry name" value="Release factor"/>
    <property type="match status" value="1"/>
</dbReference>
<dbReference type="PROSITE" id="PS00745">
    <property type="entry name" value="RF_PROK_I"/>
    <property type="match status" value="1"/>
</dbReference>
<feature type="chain" id="PRO_1000202696" description="Peptide chain release factor 1">
    <location>
        <begin position="1"/>
        <end position="358"/>
    </location>
</feature>
<feature type="modified residue" description="N5-methylglutamine" evidence="1">
    <location>
        <position position="233"/>
    </location>
</feature>
<name>RF1_GEOSW</name>
<organism>
    <name type="scientific">Geobacillus sp. (strain WCH70)</name>
    <dbReference type="NCBI Taxonomy" id="471223"/>
    <lineage>
        <taxon>Bacteria</taxon>
        <taxon>Bacillati</taxon>
        <taxon>Bacillota</taxon>
        <taxon>Bacilli</taxon>
        <taxon>Bacillales</taxon>
        <taxon>Anoxybacillaceae</taxon>
        <taxon>Geobacillus</taxon>
    </lineage>
</organism>
<accession>C5D9N4</accession>
<gene>
    <name evidence="1" type="primary">prfA</name>
    <name type="ordered locus">GWCH70_3322</name>
</gene>
<proteinExistence type="inferred from homology"/>
<sequence length="358" mass="40985">MFERLEAVEERYEKLNQLLMDPEVINDPKKLRDYSKEQSDLSETVQTYREYKSVRKQLDEAKAMLEEKLDPEMREMVKEEIDELEQKEEELVNKLKILLLPKDPNDEKNVIMEIRAAAGGEEAALFAGDLYRMYTRYAESQGWKTEVIEASPTGLGGYKEIIFTIIGKGAYSKLKYENGAHRVQRVPETESGGRIHTSTATVACLPEMEEIEVEINEKDIRVDTFASSGPGGQSVNTTMSAVRLTHIPTGIVVTCQDEKSQIKNKEKAMKVLRARIYDKYQQEARAEYDQTRKQAVGTGDRSERIRTYNFPQNRVTDHRIGLTIQKLDQVLDGNLDEIIEALILDDQSKKLEQANNEL</sequence>
<reference key="1">
    <citation type="submission" date="2009-06" db="EMBL/GenBank/DDBJ databases">
        <title>Complete sequence of chromosome of Geopacillus sp. WCH70.</title>
        <authorList>
            <consortium name="US DOE Joint Genome Institute"/>
            <person name="Lucas S."/>
            <person name="Copeland A."/>
            <person name="Lapidus A."/>
            <person name="Glavina del Rio T."/>
            <person name="Dalin E."/>
            <person name="Tice H."/>
            <person name="Bruce D."/>
            <person name="Goodwin L."/>
            <person name="Pitluck S."/>
            <person name="Chertkov O."/>
            <person name="Brettin T."/>
            <person name="Detter J.C."/>
            <person name="Han C."/>
            <person name="Larimer F."/>
            <person name="Land M."/>
            <person name="Hauser L."/>
            <person name="Kyrpides N."/>
            <person name="Mikhailova N."/>
            <person name="Brumm P."/>
            <person name="Mead D.A."/>
            <person name="Richardson P."/>
        </authorList>
    </citation>
    <scope>NUCLEOTIDE SEQUENCE [LARGE SCALE GENOMIC DNA]</scope>
    <source>
        <strain>WCH70</strain>
    </source>
</reference>